<feature type="signal peptide" evidence="2">
    <location>
        <begin position="1"/>
        <end position="20"/>
    </location>
</feature>
<feature type="chain" id="PRO_0000422906" description="Cell wall protein RBT1" evidence="2">
    <location>
        <begin position="21"/>
        <end position="696"/>
    </location>
</feature>
<feature type="propeptide" id="PRO_0000439092" description="Removed in mature form" evidence="2">
    <location>
        <begin position="697"/>
        <end position="721"/>
    </location>
</feature>
<feature type="domain" description="Flo11" evidence="3">
    <location>
        <begin position="55"/>
        <end position="278"/>
    </location>
</feature>
<feature type="region of interest" description="Disordered" evidence="4">
    <location>
        <begin position="278"/>
        <end position="410"/>
    </location>
</feature>
<feature type="region of interest" description="Disordered" evidence="4">
    <location>
        <begin position="453"/>
        <end position="510"/>
    </location>
</feature>
<feature type="region of interest" description="Disordered" evidence="4">
    <location>
        <begin position="555"/>
        <end position="666"/>
    </location>
</feature>
<feature type="compositionally biased region" description="Low complexity" evidence="4">
    <location>
        <begin position="454"/>
        <end position="499"/>
    </location>
</feature>
<feature type="compositionally biased region" description="Polar residues" evidence="4">
    <location>
        <begin position="500"/>
        <end position="510"/>
    </location>
</feature>
<feature type="compositionally biased region" description="Low complexity" evidence="4">
    <location>
        <begin position="555"/>
        <end position="575"/>
    </location>
</feature>
<feature type="compositionally biased region" description="Low complexity" evidence="4">
    <location>
        <begin position="584"/>
        <end position="663"/>
    </location>
</feature>
<feature type="lipid moiety-binding region" description="GPI-anchor amidated serine" evidence="2">
    <location>
        <position position="696"/>
    </location>
</feature>
<proteinExistence type="evidence at protein level"/>
<accession>Q59TP1</accession>
<accession>A0A1D8PLU6</accession>
<accession>Q59TK9</accession>
<organism>
    <name type="scientific">Candida albicans (strain SC5314 / ATCC MYA-2876)</name>
    <name type="common">Yeast</name>
    <dbReference type="NCBI Taxonomy" id="237561"/>
    <lineage>
        <taxon>Eukaryota</taxon>
        <taxon>Fungi</taxon>
        <taxon>Dikarya</taxon>
        <taxon>Ascomycota</taxon>
        <taxon>Saccharomycotina</taxon>
        <taxon>Pichiomycetes</taxon>
        <taxon>Debaryomycetaceae</taxon>
        <taxon>Candida/Lodderomyces clade</taxon>
        <taxon>Candida</taxon>
    </lineage>
</organism>
<gene>
    <name type="primary">RBT1</name>
    <name type="synonym">RBT99</name>
    <name type="ordered locus">CAALFM_C403520CA</name>
    <name type="ORF">CaO19.1327</name>
    <name type="ORF">CaO19.8907</name>
</gene>
<keyword id="KW-0134">Cell wall</keyword>
<keyword id="KW-0325">Glycoprotein</keyword>
<keyword id="KW-0336">GPI-anchor</keyword>
<keyword id="KW-0449">Lipoprotein</keyword>
<keyword id="KW-0472">Membrane</keyword>
<keyword id="KW-1185">Reference proteome</keyword>
<keyword id="KW-0964">Secreted</keyword>
<keyword id="KW-0732">Signal</keyword>
<evidence type="ECO:0000250" key="1"/>
<evidence type="ECO:0000255" key="2"/>
<evidence type="ECO:0000255" key="3">
    <source>
        <dbReference type="PROSITE-ProRule" id="PRU01168"/>
    </source>
</evidence>
<evidence type="ECO:0000256" key="4">
    <source>
        <dbReference type="SAM" id="MobiDB-lite"/>
    </source>
</evidence>
<evidence type="ECO:0000269" key="5">
    <source>
    </source>
</evidence>
<evidence type="ECO:0000269" key="6">
    <source>
    </source>
</evidence>
<evidence type="ECO:0000269" key="7">
    <source>
    </source>
</evidence>
<evidence type="ECO:0000269" key="8">
    <source>
    </source>
</evidence>
<evidence type="ECO:0000269" key="9">
    <source>
    </source>
</evidence>
<evidence type="ECO:0000269" key="10">
    <source>
    </source>
</evidence>
<evidence type="ECO:0000269" key="11">
    <source>
    </source>
</evidence>
<evidence type="ECO:0000269" key="12">
    <source>
    </source>
</evidence>
<evidence type="ECO:0000269" key="13">
    <source>
    </source>
</evidence>
<evidence type="ECO:0000269" key="14">
    <source>
    </source>
</evidence>
<evidence type="ECO:0000269" key="15">
    <source>
    </source>
</evidence>
<evidence type="ECO:0000269" key="16">
    <source>
    </source>
</evidence>
<evidence type="ECO:0000269" key="17">
    <source>
    </source>
</evidence>
<evidence type="ECO:0000269" key="18">
    <source>
    </source>
</evidence>
<evidence type="ECO:0000269" key="19">
    <source>
    </source>
</evidence>
<evidence type="ECO:0000269" key="20">
    <source>
    </source>
</evidence>
<evidence type="ECO:0000269" key="21">
    <source>
    </source>
</evidence>
<evidence type="ECO:0000269" key="22">
    <source>
    </source>
</evidence>
<evidence type="ECO:0000269" key="23">
    <source>
    </source>
</evidence>
<evidence type="ECO:0000305" key="24"/>
<protein>
    <recommendedName>
        <fullName>Cell wall protein RBT1</fullName>
    </recommendedName>
    <alternativeName>
        <fullName>Repressed by TUP1 protein 1</fullName>
    </alternativeName>
</protein>
<comment type="function">
    <text evidence="6 10 15 19">GPI-anchored cell wall protein required for mating efficiency, biofilm formation, and virulence. Involved in normal disseminated infection, but not in intestinal colonization.</text>
</comment>
<comment type="subcellular location">
    <subcellularLocation>
        <location evidence="17 20 21 22 23">Secreted</location>
        <location evidence="17 20 21 22 23">Cell wall</location>
    </subcellularLocation>
    <subcellularLocation>
        <location>Membrane</location>
        <topology>Lipid-anchor</topology>
        <topology>GPI-anchor</topology>
    </subcellularLocation>
</comment>
<comment type="induction">
    <text evidence="5 6 7 8 9 10 11 12 13 14 16 21 23">Expression is negatively regulated by the TUP1 transcriptional repressor. Also regulated by EFG1, RFG1 and RIM101. Induced during hyphal growth, during mating process, under alkaline conditions, and by farnesol. Repressed by fluconazole.</text>
</comment>
<comment type="PTM">
    <text evidence="1">The GPI-anchor is attached to the protein in the endoplasmic reticulum and serves to target the protein to the cell surface. There, the glucosamine-inositol phospholipid moiety is cleaved off and the GPI-modified mannoprotein is covalently attached via its lipidless GPI glycan remnant to the 1,6-beta-glucan of the outer cell wall layer (By similarity).</text>
</comment>
<comment type="disruption phenotype">
    <text evidence="18">Leads to hypersensitivity to calcofluor white (CFW).</text>
</comment>
<comment type="similarity">
    <text evidence="24">Belongs to the HWP1 family.</text>
</comment>
<name>RBT1_CANAL</name>
<sequence length="721" mass="73619">MRFATAQLAALAYYILSTEATFPLLGDIFNCIPHNTPPVCTDLGLYHDSSISLGGSKNKREAEIANKDGTIEKRTFGSAGVNAGFNAAFVVSNAKKLSDGSYGIDCNFKSDSSVQLNSAFGKKVKQLSITGTGYSDISLLGNVANPFEWSASLKVKAEIVKGKCCLPSGFRIVTDFESNCPEFDAIKQFFGSSQIIYKVNAVSNAIGTFDASALFNAQVKAFPAKRELDEFEELSNDGVTHSKRTLGLLLGLLKKVTGGCDTLQQFCWDCQCDTPSPSTTTVSTSSAPSTSPESSAPSTTTVTTSSSPVTSPESSVPETTTVTTSSVPETTPESSAPETTTVTTSSVPSTTPESSAPETTPESSAPESSVPESSAPETTPESSAPESSVPESSAPETETETTPTAHLTTTTAQTTTVITVTSCSNNACSKTEVTTGVVVVTSEDTIYTTFCPLTETTPVPSSVDSTSVTSAPETTPESTAPESSAPESSAPESSAPVTETPTGPVSTVTEQSKTIVTITSCSNNACSESKVTTGVVVVTSEDTVYTTFCPLTETTPATESASESSAPATESVPATESAPVAPESSAPGTETAPATESAPATESSPVAPGTETTPATPGAESTPVTPVAPESSAPAVESSPVAPGVETTPVAPVAPSTTAKTSALVSTTEGTIPTTLESVPAIQPSANSSYTIASVSSFEGAGNNMRLTYGAAIIGLAAFLI</sequence>
<dbReference type="EMBL" id="CP017626">
    <property type="protein sequence ID" value="AOW29110.1"/>
    <property type="molecule type" value="Genomic_DNA"/>
</dbReference>
<dbReference type="RefSeq" id="XP_709966.2">
    <property type="nucleotide sequence ID" value="XM_704874.2"/>
</dbReference>
<dbReference type="BioGRID" id="1228470">
    <property type="interactions" value="11"/>
</dbReference>
<dbReference type="STRING" id="237561.Q59TP1"/>
<dbReference type="EnsemblFungi" id="C4_03520C_A-T">
    <property type="protein sequence ID" value="C4_03520C_A-T-p1"/>
    <property type="gene ID" value="C4_03520C_A"/>
</dbReference>
<dbReference type="GeneID" id="3645377"/>
<dbReference type="KEGG" id="cal:CAALFM_C403520CA"/>
<dbReference type="CGD" id="CAL0000185934">
    <property type="gene designation" value="RBT1"/>
</dbReference>
<dbReference type="VEuPathDB" id="FungiDB:C4_03520C_A"/>
<dbReference type="eggNOG" id="ENOG502QSI5">
    <property type="taxonomic scope" value="Eukaryota"/>
</dbReference>
<dbReference type="HOGENOM" id="CLU_356004_0_0_1"/>
<dbReference type="InParanoid" id="Q59TP1"/>
<dbReference type="OrthoDB" id="4026661at2759"/>
<dbReference type="PRO" id="PR:Q59TP1"/>
<dbReference type="Proteomes" id="UP000000559">
    <property type="component" value="Chromosome 4"/>
</dbReference>
<dbReference type="GO" id="GO:0009986">
    <property type="term" value="C:cell surface"/>
    <property type="evidence" value="ECO:0000314"/>
    <property type="project" value="CGD"/>
</dbReference>
<dbReference type="GO" id="GO:0005576">
    <property type="term" value="C:extracellular region"/>
    <property type="evidence" value="ECO:0000314"/>
    <property type="project" value="CGD"/>
</dbReference>
<dbReference type="GO" id="GO:0009277">
    <property type="term" value="C:fungal-type cell wall"/>
    <property type="evidence" value="ECO:0000314"/>
    <property type="project" value="CGD"/>
</dbReference>
<dbReference type="GO" id="GO:0030446">
    <property type="term" value="C:hyphal cell wall"/>
    <property type="evidence" value="ECO:0000314"/>
    <property type="project" value="CGD"/>
</dbReference>
<dbReference type="GO" id="GO:0098552">
    <property type="term" value="C:side of membrane"/>
    <property type="evidence" value="ECO:0007669"/>
    <property type="project" value="UniProtKB-KW"/>
</dbReference>
<dbReference type="GO" id="GO:0031505">
    <property type="term" value="P:fungal-type cell wall organization"/>
    <property type="evidence" value="ECO:0000315"/>
    <property type="project" value="CGD"/>
</dbReference>
<dbReference type="InterPro" id="IPR018789">
    <property type="entry name" value="Flo11"/>
</dbReference>
<dbReference type="InterPro" id="IPR025928">
    <property type="entry name" value="Flocculin_t3_rpt"/>
</dbReference>
<dbReference type="Pfam" id="PF10182">
    <property type="entry name" value="Flo11"/>
    <property type="match status" value="1"/>
</dbReference>
<dbReference type="Pfam" id="PF13928">
    <property type="entry name" value="Flocculin_t3"/>
    <property type="match status" value="2"/>
</dbReference>
<dbReference type="SMART" id="SM01213">
    <property type="entry name" value="Flo11"/>
    <property type="match status" value="1"/>
</dbReference>
<dbReference type="PROSITE" id="PS51824">
    <property type="entry name" value="FLO11"/>
    <property type="match status" value="1"/>
</dbReference>
<reference key="1">
    <citation type="journal article" date="2004" name="Proc. Natl. Acad. Sci. U.S.A.">
        <title>The diploid genome sequence of Candida albicans.</title>
        <authorList>
            <person name="Jones T."/>
            <person name="Federspiel N.A."/>
            <person name="Chibana H."/>
            <person name="Dungan J."/>
            <person name="Kalman S."/>
            <person name="Magee B.B."/>
            <person name="Newport G."/>
            <person name="Thorstenson Y.R."/>
            <person name="Agabian N."/>
            <person name="Magee P.T."/>
            <person name="Davis R.W."/>
            <person name="Scherer S."/>
        </authorList>
    </citation>
    <scope>NUCLEOTIDE SEQUENCE [LARGE SCALE GENOMIC DNA]</scope>
    <source>
        <strain>SC5314 / ATCC MYA-2876</strain>
    </source>
</reference>
<reference key="2">
    <citation type="journal article" date="2007" name="Genome Biol.">
        <title>Assembly of the Candida albicans genome into sixteen supercontigs aligned on the eight chromosomes.</title>
        <authorList>
            <person name="van het Hoog M."/>
            <person name="Rast T.J."/>
            <person name="Martchenko M."/>
            <person name="Grindle S."/>
            <person name="Dignard D."/>
            <person name="Hogues H."/>
            <person name="Cuomo C."/>
            <person name="Berriman M."/>
            <person name="Scherer S."/>
            <person name="Magee B.B."/>
            <person name="Whiteway M."/>
            <person name="Chibana H."/>
            <person name="Nantel A."/>
            <person name="Magee P.T."/>
        </authorList>
    </citation>
    <scope>GENOME REANNOTATION</scope>
    <source>
        <strain>SC5314 / ATCC MYA-2876</strain>
    </source>
</reference>
<reference key="3">
    <citation type="journal article" date="2013" name="Genome Biol.">
        <title>Assembly of a phased diploid Candida albicans genome facilitates allele-specific measurements and provides a simple model for repeat and indel structure.</title>
        <authorList>
            <person name="Muzzey D."/>
            <person name="Schwartz K."/>
            <person name="Weissman J.S."/>
            <person name="Sherlock G."/>
        </authorList>
    </citation>
    <scope>NUCLEOTIDE SEQUENCE [LARGE SCALE GENOMIC DNA]</scope>
    <scope>GENOME REANNOTATION</scope>
    <source>
        <strain>SC5314 / ATCC MYA-2876</strain>
    </source>
</reference>
<reference key="4">
    <citation type="journal article" date="2000" name="Genetics">
        <title>TUP1, CPH1 and EFG1 make independent contributions to filamentation in Candida albicans.</title>
        <authorList>
            <person name="Braun B.R."/>
            <person name="Johnson A.D."/>
        </authorList>
    </citation>
    <scope>INDUCTION</scope>
</reference>
<reference key="5">
    <citation type="journal article" date="2000" name="Genetics">
        <title>Identification and characterization of TUP1-regulated genes in Candida albicans.</title>
        <authorList>
            <person name="Braun B.R."/>
            <person name="Head W.S."/>
            <person name="Wang M.X."/>
            <person name="Johnson A.D."/>
        </authorList>
    </citation>
    <scope>FUNCTION</scope>
    <scope>INDUCTION</scope>
</reference>
<reference key="6">
    <citation type="journal article" date="2001" name="J. Biol. Chem.">
        <title>DNA array studies demonstrate convergent regulation of virulence factors by Cph1, Cph2, and Efg1 in Candida albicans.</title>
        <authorList>
            <person name="Lane S."/>
            <person name="Birse C."/>
            <person name="Zhou S."/>
            <person name="Matson R."/>
            <person name="Liu H."/>
        </authorList>
    </citation>
    <scope>INDUCTION</scope>
</reference>
<reference key="7">
    <citation type="journal article" date="2001" name="Mol. Cell. Biol.">
        <title>Rfg1, a protein related to the Saccharomyces cerevisiae hypoxic regulator Rox1, controls filamentous growth and virulence in Candida albicans.</title>
        <authorList>
            <person name="Kadosh D."/>
            <person name="Johnson A.D."/>
        </authorList>
    </citation>
    <scope>INDUCTION</scope>
</reference>
<reference key="8">
    <citation type="journal article" date="2002" name="Mol. Biol. Cell">
        <title>Transcription profiling of Candida albicans cells undergoing the yeast-to-hyphal transition.</title>
        <authorList>
            <person name="Nantel A."/>
            <person name="Dignard D."/>
            <person name="Bachewich C."/>
            <person name="Harcus D."/>
            <person name="Marcil A."/>
            <person name="Bouin A.P."/>
            <person name="Sensen C.W."/>
            <person name="Hogues H."/>
            <person name="van het Hoog M."/>
            <person name="Gordon P."/>
            <person name="Rigby T."/>
            <person name="Benoit F."/>
            <person name="Tessier D.C."/>
            <person name="Thomas D.Y."/>
            <person name="Whiteway M."/>
        </authorList>
    </citation>
    <scope>INDUCTION</scope>
</reference>
<reference key="9">
    <citation type="journal article" date="2003" name="Mol. Cell. Biol.">
        <title>Identification and characterization of a Candida albicans mating pheromone.</title>
        <authorList>
            <person name="Bennett R.J."/>
            <person name="Uhl M.A."/>
            <person name="Miller M.G."/>
            <person name="Johnson A.D."/>
        </authorList>
    </citation>
    <scope>FUNCTION</scope>
    <scope>INDUCTION</scope>
</reference>
<reference key="10">
    <citation type="journal article" date="2003" name="Yeast">
        <title>Genome-wide identification of fungal GPI proteins.</title>
        <authorList>
            <person name="De Groot P.W."/>
            <person name="Hellingwerf K.J."/>
            <person name="Klis F.M."/>
        </authorList>
    </citation>
    <scope>PREDICTION OF GPI-ANCHOR</scope>
</reference>
<reference key="11">
    <citation type="journal article" date="2004" name="Eukaryot. Cell">
        <title>RBR1, a novel pH-regulated cell wall gene of Candida albicans, is repressed by RIM101 and activated by NRG1.</title>
        <authorList>
            <person name="Lotz H."/>
            <person name="Sohn K."/>
            <person name="Brunner H."/>
            <person name="Muhlschlegel F.A."/>
            <person name="Rupp S."/>
        </authorList>
    </citation>
    <scope>INDUCTION</scope>
</reference>
<reference key="12">
    <citation type="journal article" date="2004" name="Mol. Biol. Cell">
        <title>Transcription profiling of cyclic AMP signaling in Candida albicans.</title>
        <authorList>
            <person name="Harcus D."/>
            <person name="Nantel A."/>
            <person name="Marcil A."/>
            <person name="Rigby T."/>
            <person name="Whiteway M."/>
        </authorList>
    </citation>
    <scope>INDUCTION</scope>
</reference>
<reference key="13">
    <citation type="journal article" date="2005" name="Eukaryot. Cell">
        <title>Unique aspects of gene expression during Candida albicans mating and possible G(1) dependency.</title>
        <authorList>
            <person name="Zhao R."/>
            <person name="Daniels K.J."/>
            <person name="Lockhart S.R."/>
            <person name="Yeater K.M."/>
            <person name="Hoyer L.L."/>
            <person name="Soll D.R."/>
        </authorList>
    </citation>
    <scope>INDUCTION</scope>
</reference>
<reference key="14">
    <citation type="journal article" date="2005" name="Eukaryot. Cell">
        <title>Release from quorum-sensing molecules triggers hyphal formation during Candida albicans resumption of growth.</title>
        <authorList>
            <person name="Enjalbert B."/>
            <person name="Whiteway M."/>
        </authorList>
    </citation>
    <scope>INDUCTION</scope>
</reference>
<reference key="15">
    <citation type="journal article" date="2007" name="PLoS Pathog.">
        <title>Self-regulation of Candida albicans population size during GI colonization.</title>
        <authorList>
            <person name="White S.J."/>
            <person name="Rosenbach A."/>
            <person name="Lephart P."/>
            <person name="Nguyen D."/>
            <person name="Benjamin A."/>
            <person name="Tzipori S."/>
            <person name="Whiteway M."/>
            <person name="Mecsas J."/>
            <person name="Kumamoto C.A."/>
        </authorList>
    </citation>
    <scope>FUNCTION</scope>
</reference>
<reference key="16">
    <citation type="journal article" date="2008" name="Eukaryot. Cell">
        <title>Candida albicans Tup1 is involved in farnesol-mediated inhibition of filamentous-growth induction.</title>
        <authorList>
            <person name="Kebaara B.W."/>
            <person name="Langford M.L."/>
            <person name="Navarathna D.H."/>
            <person name="Dumitru R."/>
            <person name="Nickerson K.W."/>
            <person name="Atkin A.L."/>
        </authorList>
    </citation>
    <scope>INDUCTION</scope>
</reference>
<reference key="17">
    <citation type="journal article" date="2008" name="Fungal Genet. Biol.">
        <title>Functional analysis of Candida albicans GPI-anchored proteins: roles in cell wall integrity and caspofungin sensitivity.</title>
        <authorList>
            <person name="Plaine A."/>
            <person name="Walker L."/>
            <person name="Da Costa G."/>
            <person name="Mora-Montes H.M."/>
            <person name="McKinnon A."/>
            <person name="Gow N.A."/>
            <person name="Gaillardin C."/>
            <person name="Munro C.A."/>
            <person name="Richard M.L."/>
        </authorList>
    </citation>
    <scope>DISRUPTION PHENOTYPE</scope>
</reference>
<reference key="18">
    <citation type="journal article" date="2008" name="Proteomics">
        <title>A study of the Candida albicans cell wall proteome.</title>
        <authorList>
            <person name="Castillo L."/>
            <person name="Calvo E."/>
            <person name="Martinez A.I."/>
            <person name="Ruiz-Herrera J."/>
            <person name="Valentin E."/>
            <person name="Lopez J.A."/>
            <person name="Sentandreu R."/>
        </authorList>
    </citation>
    <scope>IDENTIFICATION BY MASS SPECTROMETRY</scope>
    <scope>SUBCELLULAR LOCATION</scope>
</reference>
<reference key="19">
    <citation type="journal article" date="2009" name="Eukaryot. Cell">
        <title>Hwp1 and related adhesins contribute to both mating and biofilm formation in Candida albicans.</title>
        <authorList>
            <person name="Ene I.V."/>
            <person name="Bennett R.J."/>
        </authorList>
    </citation>
    <scope>FUNCTION</scope>
</reference>
<reference key="20">
    <citation type="journal article" date="2010" name="Yeast">
        <title>Mass spectrometric analysis of the secretome of Candida albicans.</title>
        <authorList>
            <person name="Sorgo A.G."/>
            <person name="Heilmann C.J."/>
            <person name="Dekker H.L."/>
            <person name="Brul S."/>
            <person name="de Koster C.G."/>
            <person name="Klis F.M."/>
        </authorList>
    </citation>
    <scope>IDENTIFICATION BY MASS SPECTROMETRY</scope>
    <scope>SUBCELLULAR LOCATION</scope>
</reference>
<reference key="21">
    <citation type="journal article" date="2011" name="Eukaryot. Cell">
        <title>Effects of fluconazole on the secretome, the wall proteome, and wall integrity of the clinical fungus Candida albicans.</title>
        <authorList>
            <person name="Sorgo A.G."/>
            <person name="Heilmann C.J."/>
            <person name="Dekker H.L."/>
            <person name="Bekker M."/>
            <person name="Brul S."/>
            <person name="de Koster C.G."/>
            <person name="de Koning L.J."/>
            <person name="Klis F.M."/>
        </authorList>
    </citation>
    <scope>IDENTIFICATION BY MASS SPECTROMETRY</scope>
    <scope>SUBCELLULAR LOCATION</scope>
    <scope>INDUCTION</scope>
</reference>
<reference key="22">
    <citation type="journal article" date="2011" name="Microbiology">
        <title>Mass spectrometric quantification of the adaptations in the wall proteome of Candida albicans in response to ambient pH.</title>
        <authorList>
            <person name="Sosinska G.J."/>
            <person name="de Koning L.J."/>
            <person name="de Groot P.W."/>
            <person name="Manders E.M."/>
            <person name="Dekker H.L."/>
            <person name="Hellingwerf K.J."/>
            <person name="de Koster C.G."/>
            <person name="Klis F.M."/>
        </authorList>
    </citation>
    <scope>IDENTIFICATION BY MASS SPECTROMETRY</scope>
    <scope>SUBCELLULAR LOCATION</scope>
    <scope>INDUCTION</scope>
</reference>
<reference key="23">
    <citation type="journal article" date="2011" name="Microbiology">
        <title>Hyphal induction in the human fungal pathogen Candida albicans reveals a characteristic wall protein profile.</title>
        <authorList>
            <person name="Heilmann C.J."/>
            <person name="Sorgo A.G."/>
            <person name="Siliakus A.R."/>
            <person name="Dekker H.L."/>
            <person name="Brul S."/>
            <person name="de Koster C.G."/>
            <person name="de Koning L.J."/>
            <person name="Klis F.M."/>
        </authorList>
    </citation>
    <scope>IDENTIFICATION BY MASS SPECTROMETRY</scope>
    <scope>SUBCELLULAR LOCATION</scope>
</reference>